<dbReference type="EC" id="1.18.1.2"/>
<dbReference type="EMBL" id="X72394">
    <property type="protein sequence ID" value="CAA51088.1"/>
    <property type="molecule type" value="Genomic_DNA"/>
</dbReference>
<dbReference type="EMBL" id="X54039">
    <property type="protein sequence ID" value="CAA37973.1"/>
    <property type="molecule type" value="Genomic_DNA"/>
</dbReference>
<dbReference type="PDB" id="1B2R">
    <property type="method" value="X-ray"/>
    <property type="resolution" value="1.80 A"/>
    <property type="chains" value="A=137-440"/>
</dbReference>
<dbReference type="PDB" id="1BJK">
    <property type="method" value="X-ray"/>
    <property type="resolution" value="2.30 A"/>
    <property type="chains" value="A=146-440"/>
</dbReference>
<dbReference type="PDB" id="1BQE">
    <property type="method" value="X-ray"/>
    <property type="resolution" value="2.45 A"/>
    <property type="chains" value="A=146-440"/>
</dbReference>
<dbReference type="PDB" id="1E62">
    <property type="method" value="X-ray"/>
    <property type="resolution" value="2.30 A"/>
    <property type="chains" value="A=137-440"/>
</dbReference>
<dbReference type="PDB" id="1E63">
    <property type="method" value="X-ray"/>
    <property type="resolution" value="2.30 A"/>
    <property type="chains" value="A=137-440"/>
</dbReference>
<dbReference type="PDB" id="1E64">
    <property type="method" value="X-ray"/>
    <property type="resolution" value="2.30 A"/>
    <property type="chains" value="A=137-440"/>
</dbReference>
<dbReference type="PDB" id="1EWY">
    <property type="method" value="X-ray"/>
    <property type="resolution" value="2.38 A"/>
    <property type="chains" value="A/B=138-440"/>
</dbReference>
<dbReference type="PDB" id="1GJR">
    <property type="method" value="X-ray"/>
    <property type="resolution" value="2.10 A"/>
    <property type="chains" value="A=137-440"/>
</dbReference>
<dbReference type="PDB" id="1GO2">
    <property type="method" value="X-ray"/>
    <property type="resolution" value="1.70 A"/>
    <property type="chains" value="A=137-440"/>
</dbReference>
<dbReference type="PDB" id="1GR1">
    <property type="method" value="X-ray"/>
    <property type="resolution" value="2.50 A"/>
    <property type="chains" value="A=138-440"/>
</dbReference>
<dbReference type="PDB" id="1H42">
    <property type="method" value="X-ray"/>
    <property type="resolution" value="2.15 A"/>
    <property type="chains" value="A=137-440"/>
</dbReference>
<dbReference type="PDB" id="1H85">
    <property type="method" value="X-ray"/>
    <property type="resolution" value="2.30 A"/>
    <property type="chains" value="A=146-440"/>
</dbReference>
<dbReference type="PDB" id="1OGI">
    <property type="method" value="X-ray"/>
    <property type="resolution" value="1.64 A"/>
    <property type="chains" value="A=138-440"/>
</dbReference>
<dbReference type="PDB" id="1OGJ">
    <property type="method" value="X-ray"/>
    <property type="resolution" value="1.64 A"/>
    <property type="chains" value="A=138-440"/>
</dbReference>
<dbReference type="PDB" id="1QGY">
    <property type="method" value="X-ray"/>
    <property type="resolution" value="1.70 A"/>
    <property type="chains" value="A=146-440"/>
</dbReference>
<dbReference type="PDB" id="1QGZ">
    <property type="method" value="X-ray"/>
    <property type="resolution" value="2.30 A"/>
    <property type="chains" value="A=146-440"/>
</dbReference>
<dbReference type="PDB" id="1QH0">
    <property type="method" value="X-ray"/>
    <property type="resolution" value="1.93 A"/>
    <property type="chains" value="A=146-440"/>
</dbReference>
<dbReference type="PDB" id="1QUE">
    <property type="method" value="X-ray"/>
    <property type="resolution" value="1.80 A"/>
    <property type="chains" value="A=138-440"/>
</dbReference>
<dbReference type="PDB" id="1QUF">
    <property type="method" value="X-ray"/>
    <property type="resolution" value="2.25 A"/>
    <property type="chains" value="A=137-440"/>
</dbReference>
<dbReference type="PDB" id="1W34">
    <property type="method" value="X-ray"/>
    <property type="resolution" value="1.73 A"/>
    <property type="chains" value="A=137-440"/>
</dbReference>
<dbReference type="PDB" id="1W35">
    <property type="method" value="X-ray"/>
    <property type="resolution" value="1.90 A"/>
    <property type="chains" value="A=137-440"/>
</dbReference>
<dbReference type="PDB" id="1W87">
    <property type="method" value="X-ray"/>
    <property type="resolution" value="3.00 A"/>
    <property type="chains" value="A/B=137-440"/>
</dbReference>
<dbReference type="PDB" id="2BMW">
    <property type="method" value="X-ray"/>
    <property type="resolution" value="1.50 A"/>
    <property type="chains" value="A=137-440"/>
</dbReference>
<dbReference type="PDB" id="2BSA">
    <property type="method" value="X-ray"/>
    <property type="resolution" value="1.92 A"/>
    <property type="chains" value="A=138-440"/>
</dbReference>
<dbReference type="PDB" id="2VYQ">
    <property type="method" value="X-ray"/>
    <property type="resolution" value="1.90 A"/>
    <property type="chains" value="A=137-440"/>
</dbReference>
<dbReference type="PDB" id="2VZL">
    <property type="method" value="X-ray"/>
    <property type="resolution" value="1.93 A"/>
    <property type="chains" value="A=137-440"/>
</dbReference>
<dbReference type="PDB" id="2X3U">
    <property type="method" value="X-ray"/>
    <property type="resolution" value="1.93 A"/>
    <property type="chains" value="A=138-440"/>
</dbReference>
<dbReference type="PDB" id="3ZBT">
    <property type="method" value="X-ray"/>
    <property type="resolution" value="1.92 A"/>
    <property type="chains" value="A=138-440"/>
</dbReference>
<dbReference type="PDB" id="3ZBU">
    <property type="method" value="X-ray"/>
    <property type="resolution" value="1.89 A"/>
    <property type="chains" value="A=138-440"/>
</dbReference>
<dbReference type="PDB" id="3ZC3">
    <property type="method" value="X-ray"/>
    <property type="resolution" value="2.30 A"/>
    <property type="chains" value="A/B=138-440"/>
</dbReference>
<dbReference type="PDB" id="4BPR">
    <property type="method" value="X-ray"/>
    <property type="resolution" value="2.00 A"/>
    <property type="chains" value="A=138-440"/>
</dbReference>
<dbReference type="PDB" id="4C43">
    <property type="method" value="X-ray"/>
    <property type="resolution" value="1.70 A"/>
    <property type="chains" value="A=138-440"/>
</dbReference>
<dbReference type="PDBsum" id="1B2R"/>
<dbReference type="PDBsum" id="1BJK"/>
<dbReference type="PDBsum" id="1BQE"/>
<dbReference type="PDBsum" id="1E62"/>
<dbReference type="PDBsum" id="1E63"/>
<dbReference type="PDBsum" id="1E64"/>
<dbReference type="PDBsum" id="1EWY"/>
<dbReference type="PDBsum" id="1GJR"/>
<dbReference type="PDBsum" id="1GO2"/>
<dbReference type="PDBsum" id="1GR1"/>
<dbReference type="PDBsum" id="1H42"/>
<dbReference type="PDBsum" id="1H85"/>
<dbReference type="PDBsum" id="1OGI"/>
<dbReference type="PDBsum" id="1OGJ"/>
<dbReference type="PDBsum" id="1QGY"/>
<dbReference type="PDBsum" id="1QGZ"/>
<dbReference type="PDBsum" id="1QH0"/>
<dbReference type="PDBsum" id="1QUE"/>
<dbReference type="PDBsum" id="1QUF"/>
<dbReference type="PDBsum" id="1W34"/>
<dbReference type="PDBsum" id="1W35"/>
<dbReference type="PDBsum" id="1W87"/>
<dbReference type="PDBsum" id="2BMW"/>
<dbReference type="PDBsum" id="2BSA"/>
<dbReference type="PDBsum" id="2VYQ"/>
<dbReference type="PDBsum" id="2VZL"/>
<dbReference type="PDBsum" id="2X3U"/>
<dbReference type="PDBsum" id="3ZBT"/>
<dbReference type="PDBsum" id="3ZBU"/>
<dbReference type="PDBsum" id="3ZC3"/>
<dbReference type="PDBsum" id="4BPR"/>
<dbReference type="PDBsum" id="4C43"/>
<dbReference type="SMR" id="P21890"/>
<dbReference type="IntAct" id="P21890">
    <property type="interactions" value="3"/>
</dbReference>
<dbReference type="DrugBank" id="DB03147">
    <property type="generic name" value="Flavin adenine dinucleotide"/>
</dbReference>
<dbReference type="DrugBank" id="DB03461">
    <property type="generic name" value="Nicotinamide adenine dinucleotide phosphate"/>
</dbReference>
<dbReference type="BRENDA" id="1.18.1.2">
    <property type="organism ID" value="319"/>
</dbReference>
<dbReference type="BRENDA" id="1.19.1.1">
    <property type="organism ID" value="4371"/>
</dbReference>
<dbReference type="EvolutionaryTrace" id="P21890"/>
<dbReference type="GO" id="GO:0030089">
    <property type="term" value="C:phycobilisome"/>
    <property type="evidence" value="ECO:0007669"/>
    <property type="project" value="UniProtKB-KW"/>
</dbReference>
<dbReference type="GO" id="GO:0031676">
    <property type="term" value="C:plasma membrane-derived thylakoid membrane"/>
    <property type="evidence" value="ECO:0007669"/>
    <property type="project" value="UniProtKB-SubCell"/>
</dbReference>
<dbReference type="GO" id="GO:0004324">
    <property type="term" value="F:ferredoxin-NADP+ reductase activity"/>
    <property type="evidence" value="ECO:0000304"/>
    <property type="project" value="UniProtKB"/>
</dbReference>
<dbReference type="GO" id="GO:0050660">
    <property type="term" value="F:flavin adenine dinucleotide binding"/>
    <property type="evidence" value="ECO:0000304"/>
    <property type="project" value="UniProtKB"/>
</dbReference>
<dbReference type="GO" id="GO:0050661">
    <property type="term" value="F:NADP binding"/>
    <property type="evidence" value="ECO:0000304"/>
    <property type="project" value="UniProtKB"/>
</dbReference>
<dbReference type="GO" id="GO:0022900">
    <property type="term" value="P:electron transport chain"/>
    <property type="evidence" value="ECO:0000314"/>
    <property type="project" value="UniProtKB"/>
</dbReference>
<dbReference type="CDD" id="cd06208">
    <property type="entry name" value="CYPOR_like_FNR"/>
    <property type="match status" value="1"/>
</dbReference>
<dbReference type="FunFam" id="2.40.30.10:FF:000199">
    <property type="entry name" value="Ferredoxin--NADP reductase"/>
    <property type="match status" value="1"/>
</dbReference>
<dbReference type="FunFam" id="3.40.50.80:FF:000008">
    <property type="entry name" value="Ferredoxin--NADP reductase, chloroplastic"/>
    <property type="match status" value="1"/>
</dbReference>
<dbReference type="Gene3D" id="3.40.50.80">
    <property type="entry name" value="Nucleotide-binding domain of ferredoxin-NADP reductase (FNR) module"/>
    <property type="match status" value="1"/>
</dbReference>
<dbReference type="Gene3D" id="2.40.30.10">
    <property type="entry name" value="Translation factors"/>
    <property type="match status" value="1"/>
</dbReference>
<dbReference type="InterPro" id="IPR008213">
    <property type="entry name" value="CpcD-like_dom"/>
</dbReference>
<dbReference type="InterPro" id="IPR017927">
    <property type="entry name" value="FAD-bd_FR_type"/>
</dbReference>
<dbReference type="InterPro" id="IPR001709">
    <property type="entry name" value="Flavoprot_Pyr_Nucl_cyt_Rdtase"/>
</dbReference>
<dbReference type="InterPro" id="IPR015701">
    <property type="entry name" value="FNR"/>
</dbReference>
<dbReference type="InterPro" id="IPR039261">
    <property type="entry name" value="FNR_nucleotide-bd"/>
</dbReference>
<dbReference type="InterPro" id="IPR035442">
    <property type="entry name" value="FNR_plant_Cyanobacteria"/>
</dbReference>
<dbReference type="InterPro" id="IPR001433">
    <property type="entry name" value="OxRdtase_FAD/NAD-bd"/>
</dbReference>
<dbReference type="InterPro" id="IPR017938">
    <property type="entry name" value="Riboflavin_synthase-like_b-brl"/>
</dbReference>
<dbReference type="NCBIfam" id="NF045929">
    <property type="entry name" value="FNRPetHCyano"/>
    <property type="match status" value="1"/>
</dbReference>
<dbReference type="PANTHER" id="PTHR43314">
    <property type="match status" value="1"/>
</dbReference>
<dbReference type="Pfam" id="PF01383">
    <property type="entry name" value="CpcD"/>
    <property type="match status" value="1"/>
</dbReference>
<dbReference type="Pfam" id="PF00175">
    <property type="entry name" value="NAD_binding_1"/>
    <property type="match status" value="1"/>
</dbReference>
<dbReference type="PIRSF" id="PIRSF501178">
    <property type="entry name" value="FNR-PetH"/>
    <property type="match status" value="1"/>
</dbReference>
<dbReference type="PIRSF" id="PIRSF000361">
    <property type="entry name" value="Frd-NADP+_RD"/>
    <property type="match status" value="1"/>
</dbReference>
<dbReference type="PRINTS" id="PR00371">
    <property type="entry name" value="FPNCR"/>
</dbReference>
<dbReference type="SMART" id="SM01094">
    <property type="entry name" value="CpcD"/>
    <property type="match status" value="1"/>
</dbReference>
<dbReference type="SUPFAM" id="SSF52343">
    <property type="entry name" value="Ferredoxin reductase-like, C-terminal NADP-linked domain"/>
    <property type="match status" value="1"/>
</dbReference>
<dbReference type="SUPFAM" id="SSF63380">
    <property type="entry name" value="Riboflavin synthase domain-like"/>
    <property type="match status" value="1"/>
</dbReference>
<dbReference type="PROSITE" id="PS51441">
    <property type="entry name" value="CPCD_LIKE"/>
    <property type="match status" value="1"/>
</dbReference>
<dbReference type="PROSITE" id="PS51384">
    <property type="entry name" value="FAD_FR"/>
    <property type="match status" value="1"/>
</dbReference>
<organism>
    <name type="scientific">Nostoc sp. (strain ATCC 29151 / PCC 7119)</name>
    <name type="common">Anabaena sp.</name>
    <dbReference type="NCBI Taxonomy" id="1168"/>
    <lineage>
        <taxon>Bacteria</taxon>
        <taxon>Bacillati</taxon>
        <taxon>Cyanobacteriota</taxon>
        <taxon>Cyanophyceae</taxon>
        <taxon>Nostocales</taxon>
        <taxon>Nostocaceae</taxon>
        <taxon>Nostoc</taxon>
    </lineage>
</organism>
<feature type="chain" id="PRO_0000167632" description="Ferredoxin--NADP reductase">
    <location>
        <begin position="1"/>
        <end position="440"/>
    </location>
</feature>
<feature type="domain" description="CpcD-like" evidence="3">
    <location>
        <begin position="17"/>
        <end position="75"/>
    </location>
</feature>
<feature type="domain" description="FAD-binding FR-type" evidence="2">
    <location>
        <begin position="155"/>
        <end position="279"/>
    </location>
</feature>
<feature type="region of interest" description="Disordered" evidence="4">
    <location>
        <begin position="99"/>
        <end position="142"/>
    </location>
</feature>
<feature type="compositionally biased region" description="Basic and acidic residues" evidence="4">
    <location>
        <begin position="122"/>
        <end position="133"/>
    </location>
</feature>
<feature type="binding site">
    <location>
        <begin position="214"/>
        <end position="217"/>
    </location>
    <ligand>
        <name>FAD</name>
        <dbReference type="ChEBI" id="CHEBI:57692"/>
    </ligand>
</feature>
<feature type="binding site" evidence="1">
    <location>
        <position position="217"/>
    </location>
    <ligand>
        <name>NADP(+)</name>
        <dbReference type="ChEBI" id="CHEBI:58349"/>
    </ligand>
</feature>
<feature type="binding site">
    <location>
        <begin position="235"/>
        <end position="237"/>
    </location>
    <ligand>
        <name>FAD</name>
        <dbReference type="ChEBI" id="CHEBI:57692"/>
    </ligand>
</feature>
<feature type="binding site">
    <location>
        <position position="237"/>
    </location>
    <ligand>
        <name>NADP(+)</name>
        <dbReference type="ChEBI" id="CHEBI:58349"/>
    </ligand>
</feature>
<feature type="binding site">
    <location>
        <position position="241"/>
    </location>
    <ligand>
        <name>FAD</name>
        <dbReference type="ChEBI" id="CHEBI:57692"/>
    </ligand>
</feature>
<feature type="binding site">
    <location>
        <begin position="253"/>
        <end position="255"/>
    </location>
    <ligand>
        <name>FAD</name>
        <dbReference type="ChEBI" id="CHEBI:57692"/>
    </ligand>
</feature>
<feature type="binding site">
    <location>
        <position position="294"/>
    </location>
    <ligand>
        <name>FAD</name>
        <dbReference type="ChEBI" id="CHEBI:57692"/>
    </ligand>
</feature>
<feature type="binding site">
    <location>
        <position position="294"/>
    </location>
    <ligand>
        <name>NADP(+)</name>
        <dbReference type="ChEBI" id="CHEBI:58349"/>
    </ligand>
</feature>
<feature type="binding site" evidence="1">
    <location>
        <begin position="330"/>
        <end position="331"/>
    </location>
    <ligand>
        <name>NADP(+)</name>
        <dbReference type="ChEBI" id="CHEBI:58349"/>
    </ligand>
</feature>
<feature type="binding site">
    <location>
        <begin position="360"/>
        <end position="361"/>
    </location>
    <ligand>
        <name>NADP(+)</name>
        <dbReference type="ChEBI" id="CHEBI:58349"/>
    </ligand>
</feature>
<feature type="binding site">
    <location>
        <begin position="370"/>
        <end position="374"/>
    </location>
    <ligand>
        <name>NADP(+)</name>
        <dbReference type="ChEBI" id="CHEBI:58349"/>
    </ligand>
</feature>
<feature type="binding site" evidence="1">
    <location>
        <begin position="399"/>
        <end position="400"/>
    </location>
    <ligand>
        <name>NADP(+)</name>
        <dbReference type="ChEBI" id="CHEBI:58349"/>
    </ligand>
</feature>
<feature type="binding site" evidence="1">
    <location>
        <position position="438"/>
    </location>
    <ligand>
        <name>NADP(+)</name>
        <dbReference type="ChEBI" id="CHEBI:58349"/>
    </ligand>
</feature>
<feature type="sequence conflict" description="In Ref. 3; AA sequence." evidence="5" ref="3">
    <original>I</original>
    <variation>L</variation>
    <location>
        <position position="180"/>
    </location>
</feature>
<feature type="strand" evidence="6">
    <location>
        <begin position="144"/>
        <end position="147"/>
    </location>
</feature>
<feature type="strand" evidence="10">
    <location>
        <begin position="151"/>
        <end position="153"/>
    </location>
</feature>
<feature type="strand" evidence="10">
    <location>
        <begin position="158"/>
        <end position="167"/>
    </location>
</feature>
<feature type="strand" evidence="9">
    <location>
        <begin position="173"/>
        <end position="175"/>
    </location>
</feature>
<feature type="strand" evidence="10">
    <location>
        <begin position="177"/>
        <end position="183"/>
    </location>
</feature>
<feature type="turn" evidence="7">
    <location>
        <begin position="185"/>
        <end position="187"/>
    </location>
</feature>
<feature type="strand" evidence="10">
    <location>
        <begin position="196"/>
        <end position="200"/>
    </location>
</feature>
<feature type="strand" evidence="10">
    <location>
        <begin position="202"/>
        <end position="204"/>
    </location>
</feature>
<feature type="strand" evidence="9">
    <location>
        <begin position="208"/>
        <end position="210"/>
    </location>
</feature>
<feature type="strand" evidence="10">
    <location>
        <begin position="214"/>
        <end position="218"/>
    </location>
</feature>
<feature type="turn" evidence="10">
    <location>
        <begin position="222"/>
        <end position="227"/>
    </location>
</feature>
<feature type="strand" evidence="10">
    <location>
        <begin position="228"/>
        <end position="237"/>
    </location>
</feature>
<feature type="strand" evidence="8">
    <location>
        <begin position="240"/>
        <end position="242"/>
    </location>
</feature>
<feature type="strand" evidence="10">
    <location>
        <begin position="243"/>
        <end position="248"/>
    </location>
</feature>
<feature type="strand" evidence="8">
    <location>
        <begin position="249"/>
        <end position="251"/>
    </location>
</feature>
<feature type="helix" evidence="10">
    <location>
        <begin position="253"/>
        <end position="259"/>
    </location>
</feature>
<feature type="strand" evidence="10">
    <location>
        <begin position="266"/>
        <end position="273"/>
    </location>
</feature>
<feature type="strand" evidence="10">
    <location>
        <begin position="275"/>
        <end position="277"/>
    </location>
</feature>
<feature type="strand" evidence="10">
    <location>
        <begin position="286"/>
        <end position="292"/>
    </location>
</feature>
<feature type="helix" evidence="10">
    <location>
        <begin position="293"/>
        <end position="295"/>
    </location>
</feature>
<feature type="helix" evidence="10">
    <location>
        <begin position="296"/>
        <end position="307"/>
    </location>
</feature>
<feature type="helix" evidence="10">
    <location>
        <begin position="309"/>
        <end position="314"/>
    </location>
</feature>
<feature type="strand" evidence="10">
    <location>
        <begin position="324"/>
        <end position="332"/>
    </location>
</feature>
<feature type="helix" evidence="10">
    <location>
        <begin position="333"/>
        <end position="335"/>
    </location>
</feature>
<feature type="helix" evidence="10">
    <location>
        <begin position="339"/>
        <end position="348"/>
    </location>
</feature>
<feature type="turn" evidence="10">
    <location>
        <begin position="350"/>
        <end position="352"/>
    </location>
</feature>
<feature type="strand" evidence="10">
    <location>
        <begin position="353"/>
        <end position="359"/>
    </location>
</feature>
<feature type="turn" evidence="10">
    <location>
        <begin position="360"/>
        <end position="362"/>
    </location>
</feature>
<feature type="strand" evidence="10">
    <location>
        <begin position="368"/>
        <end position="370"/>
    </location>
</feature>
<feature type="helix" evidence="10">
    <location>
        <begin position="373"/>
        <end position="379"/>
    </location>
</feature>
<feature type="helix" evidence="10">
    <location>
        <begin position="381"/>
        <end position="388"/>
    </location>
</feature>
<feature type="strand" evidence="10">
    <location>
        <begin position="393"/>
        <end position="399"/>
    </location>
</feature>
<feature type="helix" evidence="10">
    <location>
        <begin position="403"/>
        <end position="416"/>
    </location>
</feature>
<feature type="turn" evidence="10">
    <location>
        <begin position="417"/>
        <end position="419"/>
    </location>
</feature>
<feature type="helix" evidence="10">
    <location>
        <begin position="422"/>
        <end position="431"/>
    </location>
</feature>
<feature type="strand" evidence="10">
    <location>
        <begin position="435"/>
        <end position="439"/>
    </location>
</feature>
<protein>
    <recommendedName>
        <fullName>Ferredoxin--NADP reductase</fullName>
        <shortName>FNR</shortName>
        <ecNumber>1.18.1.2</ecNumber>
    </recommendedName>
</protein>
<sequence length="440" mass="48865">MSNQGAFDGAANVESGSRVFVYEVVGMRQNEETDQTNYPIRKSGSVFIRVPYNRMNQEMQRITRLGGKIVTIQTVSALQQLNGRTTIATVTDASSEIAKSEGNGKATPVKTDSGAKAFAKPPAEEQLKKKDNKGNTMTQAKAKHADVPVNLYRPNAPFIGKVISNEPLVKEGGIGIVQHIKFDLTGGNLKYIEGQSIGIIPPGVDKNGKPEKLRLYSIASTRHGDDVDDKTISLCVRQLEYKHPESGETVYGVCSTYLTHIEPGSEVKITGPVGKEMLLPDDPEANVIMLATGTGIAPMRTYLWRMFKDAERAANPEYQFKGFSWLVFGVPTTPNILYKEELEEIQQKYPDNFRLTYAISREQKNPQGGRMYIQDRVAEHADELWQLIKNQKTHTYICGLRGMEEGIDAALSAAAAKEGVTWSDYQKDLKKAGRWHVETY</sequence>
<name>FENR_NOSSO</name>
<evidence type="ECO:0000250" key="1"/>
<evidence type="ECO:0000255" key="2">
    <source>
        <dbReference type="PROSITE-ProRule" id="PRU00716"/>
    </source>
</evidence>
<evidence type="ECO:0000255" key="3">
    <source>
        <dbReference type="PROSITE-ProRule" id="PRU00771"/>
    </source>
</evidence>
<evidence type="ECO:0000256" key="4">
    <source>
        <dbReference type="SAM" id="MobiDB-lite"/>
    </source>
</evidence>
<evidence type="ECO:0000305" key="5"/>
<evidence type="ECO:0007829" key="6">
    <source>
        <dbReference type="PDB" id="1EWY"/>
    </source>
</evidence>
<evidence type="ECO:0007829" key="7">
    <source>
        <dbReference type="PDB" id="1GJR"/>
    </source>
</evidence>
<evidence type="ECO:0007829" key="8">
    <source>
        <dbReference type="PDB" id="1W34"/>
    </source>
</evidence>
<evidence type="ECO:0007829" key="9">
    <source>
        <dbReference type="PDB" id="1W87"/>
    </source>
</evidence>
<evidence type="ECO:0007829" key="10">
    <source>
        <dbReference type="PDB" id="2BMW"/>
    </source>
</evidence>
<comment type="catalytic activity">
    <reaction>
        <text>2 reduced [2Fe-2S]-[ferredoxin] + NADP(+) + H(+) = 2 oxidized [2Fe-2S]-[ferredoxin] + NADPH</text>
        <dbReference type="Rhea" id="RHEA:20125"/>
        <dbReference type="Rhea" id="RHEA-COMP:10000"/>
        <dbReference type="Rhea" id="RHEA-COMP:10001"/>
        <dbReference type="ChEBI" id="CHEBI:15378"/>
        <dbReference type="ChEBI" id="CHEBI:33737"/>
        <dbReference type="ChEBI" id="CHEBI:33738"/>
        <dbReference type="ChEBI" id="CHEBI:57783"/>
        <dbReference type="ChEBI" id="CHEBI:58349"/>
        <dbReference type="EC" id="1.18.1.2"/>
    </reaction>
</comment>
<comment type="cofactor">
    <cofactor>
        <name>FAD</name>
        <dbReference type="ChEBI" id="CHEBI:57692"/>
    </cofactor>
</comment>
<comment type="interaction">
    <interactant intactId="EBI-593915">
        <id>P21890</id>
    </interactant>
    <interactant intactId="EBI-593907">
        <id>P0A3E0</id>
        <label>isiB</label>
    </interactant>
    <organismsDiffer>false</organismsDiffer>
    <experiments>5</experiments>
</comment>
<comment type="interaction">
    <interactant intactId="EBI-593915">
        <id>P21890</id>
    </interactant>
    <interactant intactId="EBI-637080">
        <id>P0A3C8</id>
        <label>petF</label>
    </interactant>
    <organismsDiffer>false</organismsDiffer>
    <experiments>5</experiments>
</comment>
<comment type="subcellular location">
    <subcellularLocation>
        <location>Cellular thylakoid membrane</location>
        <topology>Peripheral membrane protein</topology>
        <orientation>Cytoplasmic side</orientation>
    </subcellularLocation>
    <text>May be bound to the thylakoid membrane or anchored to the thylakoid-bound phycobilisomes.</text>
</comment>
<comment type="similarity">
    <text evidence="5">Belongs to the ferredoxin--NADP reductase type 1 family.</text>
</comment>
<accession>P21890</accession>
<gene>
    <name type="primary">petH</name>
</gene>
<reference key="1">
    <citation type="journal article" date="1993" name="Plant Mol. Biol.">
        <title>Homology of the N-terminal domain of the petH gene product from Anabaena sp. PCC 7119 to the CpcD phycobilisome linker polypeptide.</title>
        <authorList>
            <person name="Fillat M.F."/>
            <person name="Flores E."/>
            <person name="Gomez-Moreno C."/>
        </authorList>
    </citation>
    <scope>NUCLEOTIDE SEQUENCE [GENOMIC DNA]</scope>
</reference>
<reference key="2">
    <citation type="journal article" date="1990" name="Nucleic Acids Res.">
        <title>Sequence of the ferredoxin-NADP(+)-reductase gene from Anabaena PCC 7119.</title>
        <authorList>
            <person name="Fillat M.F."/>
            <person name="Bakker H.A.C."/>
            <person name="Weisbeek P.J."/>
        </authorList>
    </citation>
    <scope>NUCLEOTIDE SEQUENCE [GENOMIC DNA] OF 137-440</scope>
</reference>
<reference key="3">
    <citation type="journal article" date="1988" name="Arch. Biochem. Biophys.">
        <title>Purification and properties of ferredoxin-NADP+ oxidoreductase from the nitrogen-fixing cyanobacteria Anabaena variabilis.</title>
        <authorList>
            <person name="Sancho J."/>
            <person name="Peleato M.L."/>
            <person name="Gomez-Moreno C."/>
            <person name="Edmondson D.E."/>
        </authorList>
    </citation>
    <scope>PROTEIN SEQUENCE OF 152-183</scope>
    <source>
        <strain>1403.46</strain>
    </source>
</reference>
<reference key="4">
    <citation type="journal article" date="1996" name="J. Mol. Biol.">
        <title>X-ray structure of the ferredoxin:NADP+ reductase from the cyanobacterium Anabaena PCC 7119 at 1.8-A resolution, and crystallographic studies of NADP+ binding at 2.25-A resolution.</title>
        <authorList>
            <person name="Serre L."/>
            <person name="Vellieux F.M.D."/>
            <person name="Medina M."/>
            <person name="Gomez-Moreno C."/>
            <person name="Fontecilla-Camps J.-C."/>
            <person name="Frey M."/>
        </authorList>
    </citation>
    <scope>X-RAY CRYSTALLOGRAPHY (1.8 ANGSTROMS) OF 137-440</scope>
</reference>
<reference key="5">
    <citation type="journal article" date="1998" name="Biochemistry">
        <title>Role of Arg100 and Arg264 from Anabaena PCC 7119 ferredoxin-NADP+ reductase for optimal NADP+ binding and electron transfer.</title>
        <authorList>
            <person name="Martinez-Julvez M."/>
            <person name="Hermoso J."/>
            <person name="Hurley J.K."/>
            <person name="Mayoral T."/>
            <person name="Sanz-Aparicio J."/>
            <person name="Tollin G."/>
            <person name="Gomez-Moreno C."/>
            <person name="Medina M."/>
        </authorList>
    </citation>
    <scope>X-RAY CRYSTALLOGRAPHY (2.3 ANGSTROMS) OF 146-440</scope>
</reference>
<reference key="6">
    <citation type="journal article" date="2000" name="Proteins">
        <title>Structural basis of the catalytic role of Glu301 in Anabaena PCC 7119 ferredoxin-NADP+ reductase revealed by X-ray crystallography.</title>
        <authorList>
            <person name="Mayoral T."/>
            <person name="Medina M."/>
            <person name="Sanz-Aparicio J."/>
            <person name="Gomez-Moreno C."/>
            <person name="Hermoso J.A."/>
        </authorList>
    </citation>
    <scope>X-RAY CRYSTALLOGRAPHY (1.8 ANGSTROMS) OF 137-440</scope>
</reference>
<reference key="7">
    <citation type="journal article" date="2000" name="Acta Crystallogr. D">
        <title>Crystallographic studies of the interaction between the ferredoxin-NADP+ reductase and ferredoxin from the cyanobacterium Anabaena: looking for the elusive ferredoxin molecule.</title>
        <authorList>
            <person name="Morales R."/>
            <person name="Kachalova G."/>
            <person name="Vellieux F."/>
            <person name="Charon M.-H."/>
            <person name="Frey M."/>
        </authorList>
    </citation>
    <scope>X-RAY CRYSTALLOGRAPHY (2.38 ANGSTROMS)</scope>
</reference>
<proteinExistence type="evidence at protein level"/>
<keyword id="KW-0002">3D-structure</keyword>
<keyword id="KW-0042">Antenna complex</keyword>
<keyword id="KW-0903">Direct protein sequencing</keyword>
<keyword id="KW-0274">FAD</keyword>
<keyword id="KW-0285">Flavoprotein</keyword>
<keyword id="KW-0472">Membrane</keyword>
<keyword id="KW-0521">NADP</keyword>
<keyword id="KW-0560">Oxidoreductase</keyword>
<keyword id="KW-0605">Phycobilisome</keyword>
<keyword id="KW-0793">Thylakoid</keyword>